<reference key="1">
    <citation type="submission" date="2007-03" db="EMBL/GenBank/DDBJ databases">
        <authorList>
            <person name="Heidelberg J."/>
        </authorList>
    </citation>
    <scope>NUCLEOTIDE SEQUENCE [LARGE SCALE GENOMIC DNA]</scope>
    <source>
        <strain>ATCC 39541 / Classical Ogawa 395 / O395</strain>
    </source>
</reference>
<reference key="2">
    <citation type="journal article" date="2008" name="PLoS ONE">
        <title>A recalibrated molecular clock and independent origins for the cholera pandemic clones.</title>
        <authorList>
            <person name="Feng L."/>
            <person name="Reeves P.R."/>
            <person name="Lan R."/>
            <person name="Ren Y."/>
            <person name="Gao C."/>
            <person name="Zhou Z."/>
            <person name="Ren Y."/>
            <person name="Cheng J."/>
            <person name="Wang W."/>
            <person name="Wang J."/>
            <person name="Qian W."/>
            <person name="Li D."/>
            <person name="Wang L."/>
        </authorList>
    </citation>
    <scope>NUCLEOTIDE SEQUENCE [LARGE SCALE GENOMIC DNA]</scope>
    <source>
        <strain>ATCC 39541 / Classical Ogawa 395 / O395</strain>
    </source>
</reference>
<name>TUSA_VIBC3</name>
<evidence type="ECO:0000255" key="1">
    <source>
        <dbReference type="HAMAP-Rule" id="MF_00413"/>
    </source>
</evidence>
<comment type="function">
    <text evidence="1">Sulfur carrier protein which probably makes part of a sulfur-relay system.</text>
</comment>
<comment type="subcellular location">
    <subcellularLocation>
        <location evidence="1">Cytoplasm</location>
    </subcellularLocation>
</comment>
<comment type="similarity">
    <text evidence="1">Belongs to the sulfur carrier protein TusA family.</text>
</comment>
<sequence>MTFNPNIATHTLEAEGLRCPEPVMMVRKTIRTMLDGEVLLVTADDPSTTRDIPSFCRFMDHQLLGAQIDQLPYQYLIKKGLA</sequence>
<accession>A5F4A1</accession>
<accession>C3M304</accession>
<protein>
    <recommendedName>
        <fullName evidence="1">Sulfur carrier protein TusA</fullName>
    </recommendedName>
</protein>
<gene>
    <name evidence="1" type="primary">tusA</name>
    <name type="ordered locus">VC0395_A2495</name>
    <name type="ordered locus">VC395_0156</name>
</gene>
<proteinExistence type="inferred from homology"/>
<keyword id="KW-0963">Cytoplasm</keyword>
<feature type="chain" id="PRO_1000072282" description="Sulfur carrier protein TusA">
    <location>
        <begin position="1"/>
        <end position="82"/>
    </location>
</feature>
<feature type="active site" description="Cysteine persulfide intermediate" evidence="1">
    <location>
        <position position="19"/>
    </location>
</feature>
<dbReference type="EMBL" id="CP000627">
    <property type="protein sequence ID" value="ABQ21891.1"/>
    <property type="molecule type" value="Genomic_DNA"/>
</dbReference>
<dbReference type="EMBL" id="CP001235">
    <property type="protein sequence ID" value="ACP08183.1"/>
    <property type="molecule type" value="Genomic_DNA"/>
</dbReference>
<dbReference type="RefSeq" id="WP_000143763.1">
    <property type="nucleotide sequence ID" value="NZ_JAACZH010000018.1"/>
</dbReference>
<dbReference type="SMR" id="A5F4A1"/>
<dbReference type="GeneID" id="69721180"/>
<dbReference type="KEGG" id="vco:VC0395_A2495"/>
<dbReference type="KEGG" id="vcr:VC395_0156"/>
<dbReference type="PATRIC" id="fig|345073.21.peg.147"/>
<dbReference type="eggNOG" id="COG0425">
    <property type="taxonomic scope" value="Bacteria"/>
</dbReference>
<dbReference type="HOGENOM" id="CLU_165255_5_1_6"/>
<dbReference type="OrthoDB" id="9797352at2"/>
<dbReference type="Proteomes" id="UP000000249">
    <property type="component" value="Chromosome 2"/>
</dbReference>
<dbReference type="GO" id="GO:0005737">
    <property type="term" value="C:cytoplasm"/>
    <property type="evidence" value="ECO:0007669"/>
    <property type="project" value="UniProtKB-SubCell"/>
</dbReference>
<dbReference type="GO" id="GO:0097163">
    <property type="term" value="F:sulfur carrier activity"/>
    <property type="evidence" value="ECO:0007669"/>
    <property type="project" value="UniProtKB-UniRule"/>
</dbReference>
<dbReference type="GO" id="GO:0002143">
    <property type="term" value="P:tRNA wobble position uridine thiolation"/>
    <property type="evidence" value="ECO:0007669"/>
    <property type="project" value="InterPro"/>
</dbReference>
<dbReference type="Gene3D" id="3.30.110.40">
    <property type="entry name" value="TusA-like domain"/>
    <property type="match status" value="1"/>
</dbReference>
<dbReference type="HAMAP" id="MF_00413">
    <property type="entry name" value="Thiourid_synth_A"/>
    <property type="match status" value="1"/>
</dbReference>
<dbReference type="InterPro" id="IPR022931">
    <property type="entry name" value="Sulphur_carrier_TusA"/>
</dbReference>
<dbReference type="InterPro" id="IPR001455">
    <property type="entry name" value="TusA-like"/>
</dbReference>
<dbReference type="InterPro" id="IPR036868">
    <property type="entry name" value="TusA-like_sf"/>
</dbReference>
<dbReference type="NCBIfam" id="NF001423">
    <property type="entry name" value="PRK00299.1"/>
    <property type="match status" value="1"/>
</dbReference>
<dbReference type="PANTHER" id="PTHR33279:SF2">
    <property type="entry name" value="SULFUR CARRIER PROTEIN TUSA"/>
    <property type="match status" value="1"/>
</dbReference>
<dbReference type="PANTHER" id="PTHR33279">
    <property type="entry name" value="SULFUR CARRIER PROTEIN YEDF-RELATED"/>
    <property type="match status" value="1"/>
</dbReference>
<dbReference type="Pfam" id="PF01206">
    <property type="entry name" value="TusA"/>
    <property type="match status" value="1"/>
</dbReference>
<dbReference type="SUPFAM" id="SSF64307">
    <property type="entry name" value="SirA-like"/>
    <property type="match status" value="1"/>
</dbReference>
<dbReference type="PROSITE" id="PS01148">
    <property type="entry name" value="UPF0033"/>
    <property type="match status" value="1"/>
</dbReference>
<organism>
    <name type="scientific">Vibrio cholerae serotype O1 (strain ATCC 39541 / Classical Ogawa 395 / O395)</name>
    <dbReference type="NCBI Taxonomy" id="345073"/>
    <lineage>
        <taxon>Bacteria</taxon>
        <taxon>Pseudomonadati</taxon>
        <taxon>Pseudomonadota</taxon>
        <taxon>Gammaproteobacteria</taxon>
        <taxon>Vibrionales</taxon>
        <taxon>Vibrionaceae</taxon>
        <taxon>Vibrio</taxon>
    </lineage>
</organism>